<dbReference type="EC" id="2.7.7.7" evidence="1"/>
<dbReference type="EMBL" id="CP000050">
    <property type="protein sequence ID" value="AAY50691.1"/>
    <property type="molecule type" value="Genomic_DNA"/>
</dbReference>
<dbReference type="RefSeq" id="WP_011035828.1">
    <property type="nucleotide sequence ID" value="NZ_CP155948.1"/>
</dbReference>
<dbReference type="SMR" id="Q4UQI2"/>
<dbReference type="GeneID" id="58014855"/>
<dbReference type="KEGG" id="xcb:XC_3650"/>
<dbReference type="HOGENOM" id="CLU_012348_1_2_6"/>
<dbReference type="Proteomes" id="UP000000420">
    <property type="component" value="Chromosome"/>
</dbReference>
<dbReference type="GO" id="GO:0005829">
    <property type="term" value="C:cytosol"/>
    <property type="evidence" value="ECO:0007669"/>
    <property type="project" value="TreeGrafter"/>
</dbReference>
<dbReference type="GO" id="GO:0003684">
    <property type="term" value="F:damaged DNA binding"/>
    <property type="evidence" value="ECO:0007669"/>
    <property type="project" value="InterPro"/>
</dbReference>
<dbReference type="GO" id="GO:0003887">
    <property type="term" value="F:DNA-directed DNA polymerase activity"/>
    <property type="evidence" value="ECO:0007669"/>
    <property type="project" value="UniProtKB-UniRule"/>
</dbReference>
<dbReference type="GO" id="GO:0000287">
    <property type="term" value="F:magnesium ion binding"/>
    <property type="evidence" value="ECO:0007669"/>
    <property type="project" value="UniProtKB-UniRule"/>
</dbReference>
<dbReference type="GO" id="GO:0006261">
    <property type="term" value="P:DNA-templated DNA replication"/>
    <property type="evidence" value="ECO:0007669"/>
    <property type="project" value="UniProtKB-UniRule"/>
</dbReference>
<dbReference type="GO" id="GO:0042276">
    <property type="term" value="P:error-prone translesion synthesis"/>
    <property type="evidence" value="ECO:0007669"/>
    <property type="project" value="TreeGrafter"/>
</dbReference>
<dbReference type="GO" id="GO:0009432">
    <property type="term" value="P:SOS response"/>
    <property type="evidence" value="ECO:0007669"/>
    <property type="project" value="TreeGrafter"/>
</dbReference>
<dbReference type="CDD" id="cd03586">
    <property type="entry name" value="PolY_Pol_IV_kappa"/>
    <property type="match status" value="1"/>
</dbReference>
<dbReference type="FunFam" id="1.10.150.20:FF:000019">
    <property type="entry name" value="DNA polymerase IV"/>
    <property type="match status" value="1"/>
</dbReference>
<dbReference type="FunFam" id="3.30.1490.100:FF:000004">
    <property type="entry name" value="DNA polymerase IV"/>
    <property type="match status" value="1"/>
</dbReference>
<dbReference type="FunFam" id="3.30.70.270:FF:000002">
    <property type="entry name" value="DNA polymerase IV"/>
    <property type="match status" value="1"/>
</dbReference>
<dbReference type="FunFam" id="3.40.1170.60:FF:000001">
    <property type="entry name" value="DNA polymerase IV"/>
    <property type="match status" value="1"/>
</dbReference>
<dbReference type="Gene3D" id="3.30.70.270">
    <property type="match status" value="1"/>
</dbReference>
<dbReference type="Gene3D" id="3.40.1170.60">
    <property type="match status" value="1"/>
</dbReference>
<dbReference type="Gene3D" id="1.10.150.20">
    <property type="entry name" value="5' to 3' exonuclease, C-terminal subdomain"/>
    <property type="match status" value="1"/>
</dbReference>
<dbReference type="Gene3D" id="3.30.1490.100">
    <property type="entry name" value="DNA polymerase, Y-family, little finger domain"/>
    <property type="match status" value="1"/>
</dbReference>
<dbReference type="HAMAP" id="MF_01113">
    <property type="entry name" value="DNApol_IV"/>
    <property type="match status" value="1"/>
</dbReference>
<dbReference type="InterPro" id="IPR043502">
    <property type="entry name" value="DNA/RNA_pol_sf"/>
</dbReference>
<dbReference type="InterPro" id="IPR036775">
    <property type="entry name" value="DNA_pol_Y-fam_lit_finger_sf"/>
</dbReference>
<dbReference type="InterPro" id="IPR017961">
    <property type="entry name" value="DNA_pol_Y-fam_little_finger"/>
</dbReference>
<dbReference type="InterPro" id="IPR050116">
    <property type="entry name" value="DNA_polymerase-Y"/>
</dbReference>
<dbReference type="InterPro" id="IPR022880">
    <property type="entry name" value="DNApol_IV"/>
</dbReference>
<dbReference type="InterPro" id="IPR053848">
    <property type="entry name" value="IMS_HHH_1"/>
</dbReference>
<dbReference type="InterPro" id="IPR043128">
    <property type="entry name" value="Rev_trsase/Diguanyl_cyclase"/>
</dbReference>
<dbReference type="InterPro" id="IPR001126">
    <property type="entry name" value="UmuC"/>
</dbReference>
<dbReference type="NCBIfam" id="NF002677">
    <property type="entry name" value="PRK02406.1"/>
    <property type="match status" value="1"/>
</dbReference>
<dbReference type="PANTHER" id="PTHR11076:SF33">
    <property type="entry name" value="DNA POLYMERASE KAPPA"/>
    <property type="match status" value="1"/>
</dbReference>
<dbReference type="PANTHER" id="PTHR11076">
    <property type="entry name" value="DNA REPAIR POLYMERASE UMUC / TRANSFERASE FAMILY MEMBER"/>
    <property type="match status" value="1"/>
</dbReference>
<dbReference type="Pfam" id="PF00817">
    <property type="entry name" value="IMS"/>
    <property type="match status" value="1"/>
</dbReference>
<dbReference type="Pfam" id="PF11799">
    <property type="entry name" value="IMS_C"/>
    <property type="match status" value="1"/>
</dbReference>
<dbReference type="Pfam" id="PF21999">
    <property type="entry name" value="IMS_HHH_1"/>
    <property type="match status" value="1"/>
</dbReference>
<dbReference type="SUPFAM" id="SSF56672">
    <property type="entry name" value="DNA/RNA polymerases"/>
    <property type="match status" value="1"/>
</dbReference>
<dbReference type="SUPFAM" id="SSF100879">
    <property type="entry name" value="Lesion bypass DNA polymerase (Y-family), little finger domain"/>
    <property type="match status" value="1"/>
</dbReference>
<dbReference type="PROSITE" id="PS50173">
    <property type="entry name" value="UMUC"/>
    <property type="match status" value="1"/>
</dbReference>
<proteinExistence type="inferred from homology"/>
<feature type="chain" id="PRO_1000084969" description="DNA polymerase IV">
    <location>
        <begin position="1"/>
        <end position="359"/>
    </location>
</feature>
<feature type="domain" description="UmuC" evidence="1">
    <location>
        <begin position="4"/>
        <end position="184"/>
    </location>
</feature>
<feature type="active site" evidence="1">
    <location>
        <position position="103"/>
    </location>
</feature>
<feature type="binding site" evidence="1">
    <location>
        <position position="8"/>
    </location>
    <ligand>
        <name>Mg(2+)</name>
        <dbReference type="ChEBI" id="CHEBI:18420"/>
    </ligand>
</feature>
<feature type="binding site" evidence="1">
    <location>
        <position position="102"/>
    </location>
    <ligand>
        <name>Mg(2+)</name>
        <dbReference type="ChEBI" id="CHEBI:18420"/>
    </ligand>
</feature>
<feature type="site" description="Substrate discrimination" evidence="1">
    <location>
        <position position="13"/>
    </location>
</feature>
<organism>
    <name type="scientific">Xanthomonas campestris pv. campestris (strain 8004)</name>
    <dbReference type="NCBI Taxonomy" id="314565"/>
    <lineage>
        <taxon>Bacteria</taxon>
        <taxon>Pseudomonadati</taxon>
        <taxon>Pseudomonadota</taxon>
        <taxon>Gammaproteobacteria</taxon>
        <taxon>Lysobacterales</taxon>
        <taxon>Lysobacteraceae</taxon>
        <taxon>Xanthomonas</taxon>
    </lineage>
</organism>
<accession>Q4UQI2</accession>
<comment type="function">
    <text evidence="1">Poorly processive, error-prone DNA polymerase involved in untargeted mutagenesis. Copies undamaged DNA at stalled replication forks, which arise in vivo from mismatched or misaligned primer ends. These misaligned primers can be extended by PolIV. Exhibits no 3'-5' exonuclease (proofreading) activity. May be involved in translesional synthesis, in conjunction with the beta clamp from PolIII.</text>
</comment>
<comment type="catalytic activity">
    <reaction evidence="1">
        <text>DNA(n) + a 2'-deoxyribonucleoside 5'-triphosphate = DNA(n+1) + diphosphate</text>
        <dbReference type="Rhea" id="RHEA:22508"/>
        <dbReference type="Rhea" id="RHEA-COMP:17339"/>
        <dbReference type="Rhea" id="RHEA-COMP:17340"/>
        <dbReference type="ChEBI" id="CHEBI:33019"/>
        <dbReference type="ChEBI" id="CHEBI:61560"/>
        <dbReference type="ChEBI" id="CHEBI:173112"/>
        <dbReference type="EC" id="2.7.7.7"/>
    </reaction>
</comment>
<comment type="cofactor">
    <cofactor evidence="1">
        <name>Mg(2+)</name>
        <dbReference type="ChEBI" id="CHEBI:18420"/>
    </cofactor>
    <text evidence="1">Binds 2 magnesium ions per subunit.</text>
</comment>
<comment type="subunit">
    <text evidence="1">Monomer.</text>
</comment>
<comment type="subcellular location">
    <subcellularLocation>
        <location evidence="1">Cytoplasm</location>
    </subcellularLocation>
</comment>
<comment type="similarity">
    <text evidence="1">Belongs to the DNA polymerase type-Y family.</text>
</comment>
<keyword id="KW-0963">Cytoplasm</keyword>
<keyword id="KW-0227">DNA damage</keyword>
<keyword id="KW-0234">DNA repair</keyword>
<keyword id="KW-0235">DNA replication</keyword>
<keyword id="KW-0238">DNA-binding</keyword>
<keyword id="KW-0239">DNA-directed DNA polymerase</keyword>
<keyword id="KW-0460">Magnesium</keyword>
<keyword id="KW-0479">Metal-binding</keyword>
<keyword id="KW-0515">Mutator protein</keyword>
<keyword id="KW-0548">Nucleotidyltransferase</keyword>
<keyword id="KW-0808">Transferase</keyword>
<name>DPO4_XANC8</name>
<sequence length="359" mass="39958">MRKIVHVDMDAFYASVEQRDDPSLRGKPVVVAWRGARSVVCAASYEARTFGIRSAMPAVRAERLCPDAVFVPPDFARYKAVSRQVREIFHRHTDLVEPLSLDEAYLDVTEAKTGMQLATEIAQLIRTQIREETQLTASAGIAPNKFLAKIASDWRKPDGQFVIAPSRVDAFLLPLPVNRIPGVGKVMDGKLAALGIVTVSDLRLRPLEELQAHFGSFGQSLYRRARGIDERPVEPDQEVQSVSSEDTFSEDLALDALDPHIQRLAEKTWHATRRTERIGRTVVLKLKTSNFRILTRSYTPEQPPASLQGLVDIALGLTRRVELPPETRYRLVGVGLSGFSDPELQAAVQGELFGEVPQQ</sequence>
<evidence type="ECO:0000255" key="1">
    <source>
        <dbReference type="HAMAP-Rule" id="MF_01113"/>
    </source>
</evidence>
<protein>
    <recommendedName>
        <fullName evidence="1">DNA polymerase IV</fullName>
        <shortName evidence="1">Pol IV</shortName>
        <ecNumber evidence="1">2.7.7.7</ecNumber>
    </recommendedName>
</protein>
<gene>
    <name evidence="1" type="primary">dinB</name>
    <name type="ordered locus">XC_3650</name>
</gene>
<reference key="1">
    <citation type="journal article" date="2005" name="Genome Res.">
        <title>Comparative and functional genomic analyses of the pathogenicity of phytopathogen Xanthomonas campestris pv. campestris.</title>
        <authorList>
            <person name="Qian W."/>
            <person name="Jia Y."/>
            <person name="Ren S.-X."/>
            <person name="He Y.-Q."/>
            <person name="Feng J.-X."/>
            <person name="Lu L.-F."/>
            <person name="Sun Q."/>
            <person name="Ying G."/>
            <person name="Tang D.-J."/>
            <person name="Tang H."/>
            <person name="Wu W."/>
            <person name="Hao P."/>
            <person name="Wang L."/>
            <person name="Jiang B.-L."/>
            <person name="Zeng S."/>
            <person name="Gu W.-Y."/>
            <person name="Lu G."/>
            <person name="Rong L."/>
            <person name="Tian Y."/>
            <person name="Yao Z."/>
            <person name="Fu G."/>
            <person name="Chen B."/>
            <person name="Fang R."/>
            <person name="Qiang B."/>
            <person name="Chen Z."/>
            <person name="Zhao G.-P."/>
            <person name="Tang J.-L."/>
            <person name="He C."/>
        </authorList>
    </citation>
    <scope>NUCLEOTIDE SEQUENCE [LARGE SCALE GENOMIC DNA]</scope>
    <source>
        <strain>8004</strain>
    </source>
</reference>